<feature type="chain" id="PRO_1000060978" description="ATP synthase epsilon chain">
    <location>
        <begin position="1"/>
        <end position="139"/>
    </location>
</feature>
<evidence type="ECO:0000255" key="1">
    <source>
        <dbReference type="HAMAP-Rule" id="MF_00530"/>
    </source>
</evidence>
<sequence length="139" mass="15068">MAMTYHLDVVSAEQQMFSGLVEKIQVTGSEGELGIYPGHAPLLTAIKPGMIRIVKQHGHEEFIYLSGGILEVQPGNVTVLADTAIRGQDLDEARAMEAKRKAEEHISSSHGDVDYAQASAELAKAIAQLRVIELTKKAM</sequence>
<name>ATPE_ECO24</name>
<comment type="function">
    <text evidence="1">Produces ATP from ADP in the presence of a proton gradient across the membrane.</text>
</comment>
<comment type="subunit">
    <text evidence="1">F-type ATPases have 2 components, CF(1) - the catalytic core - and CF(0) - the membrane proton channel. CF(1) has five subunits: alpha(3), beta(3), gamma(1), delta(1), epsilon(1). CF(0) has three main subunits: a, b and c.</text>
</comment>
<comment type="subcellular location">
    <subcellularLocation>
        <location evidence="1">Cell inner membrane</location>
        <topology evidence="1">Peripheral membrane protein</topology>
    </subcellularLocation>
</comment>
<comment type="similarity">
    <text evidence="1">Belongs to the ATPase epsilon chain family.</text>
</comment>
<organism>
    <name type="scientific">Escherichia coli O139:H28 (strain E24377A / ETEC)</name>
    <dbReference type="NCBI Taxonomy" id="331111"/>
    <lineage>
        <taxon>Bacteria</taxon>
        <taxon>Pseudomonadati</taxon>
        <taxon>Pseudomonadota</taxon>
        <taxon>Gammaproteobacteria</taxon>
        <taxon>Enterobacterales</taxon>
        <taxon>Enterobacteriaceae</taxon>
        <taxon>Escherichia</taxon>
    </lineage>
</organism>
<dbReference type="EMBL" id="CP000800">
    <property type="protein sequence ID" value="ABV18894.1"/>
    <property type="molecule type" value="Genomic_DNA"/>
</dbReference>
<dbReference type="RefSeq" id="WP_001251965.1">
    <property type="nucleotide sequence ID" value="NC_009801.1"/>
</dbReference>
<dbReference type="SMR" id="A7ZTU3"/>
<dbReference type="KEGG" id="ecw:EcE24377A_4246"/>
<dbReference type="HOGENOM" id="CLU_084338_2_0_6"/>
<dbReference type="Proteomes" id="UP000001122">
    <property type="component" value="Chromosome"/>
</dbReference>
<dbReference type="GO" id="GO:0005886">
    <property type="term" value="C:plasma membrane"/>
    <property type="evidence" value="ECO:0007669"/>
    <property type="project" value="UniProtKB-SubCell"/>
</dbReference>
<dbReference type="GO" id="GO:0045259">
    <property type="term" value="C:proton-transporting ATP synthase complex"/>
    <property type="evidence" value="ECO:0007669"/>
    <property type="project" value="UniProtKB-KW"/>
</dbReference>
<dbReference type="GO" id="GO:0005524">
    <property type="term" value="F:ATP binding"/>
    <property type="evidence" value="ECO:0007669"/>
    <property type="project" value="UniProtKB-UniRule"/>
</dbReference>
<dbReference type="GO" id="GO:0046933">
    <property type="term" value="F:proton-transporting ATP synthase activity, rotational mechanism"/>
    <property type="evidence" value="ECO:0007669"/>
    <property type="project" value="UniProtKB-UniRule"/>
</dbReference>
<dbReference type="CDD" id="cd12152">
    <property type="entry name" value="F1-ATPase_delta"/>
    <property type="match status" value="1"/>
</dbReference>
<dbReference type="FunFam" id="1.20.5.440:FF:000001">
    <property type="entry name" value="ATP synthase epsilon chain"/>
    <property type="match status" value="1"/>
</dbReference>
<dbReference type="FunFam" id="2.60.15.10:FF:000001">
    <property type="entry name" value="ATP synthase epsilon chain"/>
    <property type="match status" value="1"/>
</dbReference>
<dbReference type="Gene3D" id="1.20.5.440">
    <property type="entry name" value="ATP synthase delta/epsilon subunit, C-terminal domain"/>
    <property type="match status" value="1"/>
</dbReference>
<dbReference type="Gene3D" id="2.60.15.10">
    <property type="entry name" value="F0F1 ATP synthase delta/epsilon subunit, N-terminal"/>
    <property type="match status" value="1"/>
</dbReference>
<dbReference type="HAMAP" id="MF_00530">
    <property type="entry name" value="ATP_synth_epsil_bac"/>
    <property type="match status" value="1"/>
</dbReference>
<dbReference type="InterPro" id="IPR036794">
    <property type="entry name" value="ATP_F1_dsu/esu_C_sf"/>
</dbReference>
<dbReference type="InterPro" id="IPR001469">
    <property type="entry name" value="ATP_synth_F1_dsu/esu"/>
</dbReference>
<dbReference type="InterPro" id="IPR020546">
    <property type="entry name" value="ATP_synth_F1_dsu/esu_N"/>
</dbReference>
<dbReference type="InterPro" id="IPR020547">
    <property type="entry name" value="ATP_synth_F1_esu_C"/>
</dbReference>
<dbReference type="InterPro" id="IPR036771">
    <property type="entry name" value="ATPsynth_dsu/esu_N"/>
</dbReference>
<dbReference type="NCBIfam" id="TIGR01216">
    <property type="entry name" value="ATP_synt_epsi"/>
    <property type="match status" value="1"/>
</dbReference>
<dbReference type="NCBIfam" id="NF001847">
    <property type="entry name" value="PRK00571.1-4"/>
    <property type="match status" value="1"/>
</dbReference>
<dbReference type="PANTHER" id="PTHR13822">
    <property type="entry name" value="ATP SYNTHASE DELTA/EPSILON CHAIN"/>
    <property type="match status" value="1"/>
</dbReference>
<dbReference type="PANTHER" id="PTHR13822:SF10">
    <property type="entry name" value="ATP SYNTHASE EPSILON CHAIN, CHLOROPLASTIC"/>
    <property type="match status" value="1"/>
</dbReference>
<dbReference type="Pfam" id="PF00401">
    <property type="entry name" value="ATP-synt_DE"/>
    <property type="match status" value="1"/>
</dbReference>
<dbReference type="Pfam" id="PF02823">
    <property type="entry name" value="ATP-synt_DE_N"/>
    <property type="match status" value="1"/>
</dbReference>
<dbReference type="SUPFAM" id="SSF46604">
    <property type="entry name" value="Epsilon subunit of F1F0-ATP synthase C-terminal domain"/>
    <property type="match status" value="1"/>
</dbReference>
<dbReference type="SUPFAM" id="SSF51344">
    <property type="entry name" value="Epsilon subunit of F1F0-ATP synthase N-terminal domain"/>
    <property type="match status" value="1"/>
</dbReference>
<protein>
    <recommendedName>
        <fullName evidence="1">ATP synthase epsilon chain</fullName>
    </recommendedName>
    <alternativeName>
        <fullName evidence="1">ATP synthase F1 sector epsilon subunit</fullName>
    </alternativeName>
    <alternativeName>
        <fullName evidence="1">F-ATPase epsilon subunit</fullName>
    </alternativeName>
</protein>
<proteinExistence type="inferred from homology"/>
<keyword id="KW-0066">ATP synthesis</keyword>
<keyword id="KW-0997">Cell inner membrane</keyword>
<keyword id="KW-1003">Cell membrane</keyword>
<keyword id="KW-0139">CF(1)</keyword>
<keyword id="KW-0375">Hydrogen ion transport</keyword>
<keyword id="KW-0406">Ion transport</keyword>
<keyword id="KW-0472">Membrane</keyword>
<keyword id="KW-1185">Reference proteome</keyword>
<keyword id="KW-0813">Transport</keyword>
<reference key="1">
    <citation type="journal article" date="2008" name="J. Bacteriol.">
        <title>The pangenome structure of Escherichia coli: comparative genomic analysis of E. coli commensal and pathogenic isolates.</title>
        <authorList>
            <person name="Rasko D.A."/>
            <person name="Rosovitz M.J."/>
            <person name="Myers G.S.A."/>
            <person name="Mongodin E.F."/>
            <person name="Fricke W.F."/>
            <person name="Gajer P."/>
            <person name="Crabtree J."/>
            <person name="Sebaihia M."/>
            <person name="Thomson N.R."/>
            <person name="Chaudhuri R."/>
            <person name="Henderson I.R."/>
            <person name="Sperandio V."/>
            <person name="Ravel J."/>
        </authorList>
    </citation>
    <scope>NUCLEOTIDE SEQUENCE [LARGE SCALE GENOMIC DNA]</scope>
    <source>
        <strain>E24377A / ETEC</strain>
    </source>
</reference>
<accession>A7ZTU3</accession>
<gene>
    <name evidence="1" type="primary">atpC</name>
    <name type="ordered locus">EcE24377A_4246</name>
</gene>